<organism>
    <name type="scientific">Shigella boydii serotype 4 (strain Sb227)</name>
    <dbReference type="NCBI Taxonomy" id="300268"/>
    <lineage>
        <taxon>Bacteria</taxon>
        <taxon>Pseudomonadati</taxon>
        <taxon>Pseudomonadota</taxon>
        <taxon>Gammaproteobacteria</taxon>
        <taxon>Enterobacterales</taxon>
        <taxon>Enterobacteriaceae</taxon>
        <taxon>Shigella</taxon>
    </lineage>
</organism>
<gene>
    <name type="primary">safA</name>
    <name type="ordered locus">SBO_1556</name>
</gene>
<sequence>MHATTVKNKITQRDNYKEIMSVIVVVLLLTLTLIAIFSAIDQLGISEMGRIARDLTHFIINSLQD</sequence>
<accession>Q320T9</accession>
<name>SAFA_SHIBS</name>
<reference key="1">
    <citation type="journal article" date="2005" name="Nucleic Acids Res.">
        <title>Genome dynamics and diversity of Shigella species, the etiologic agents of bacillary dysentery.</title>
        <authorList>
            <person name="Yang F."/>
            <person name="Yang J."/>
            <person name="Zhang X."/>
            <person name="Chen L."/>
            <person name="Jiang Y."/>
            <person name="Yan Y."/>
            <person name="Tang X."/>
            <person name="Wang J."/>
            <person name="Xiong Z."/>
            <person name="Dong J."/>
            <person name="Xue Y."/>
            <person name="Zhu Y."/>
            <person name="Xu X."/>
            <person name="Sun L."/>
            <person name="Chen S."/>
            <person name="Nie H."/>
            <person name="Peng J."/>
            <person name="Xu J."/>
            <person name="Wang Y."/>
            <person name="Yuan Z."/>
            <person name="Wen Y."/>
            <person name="Yao Z."/>
            <person name="Shen Y."/>
            <person name="Qiang B."/>
            <person name="Hou Y."/>
            <person name="Yu J."/>
            <person name="Jin Q."/>
        </authorList>
    </citation>
    <scope>NUCLEOTIDE SEQUENCE [LARGE SCALE GENOMIC DNA]</scope>
    <source>
        <strain>Sb227</strain>
    </source>
</reference>
<protein>
    <recommendedName>
        <fullName>Two-component-system connector protein SafA</fullName>
    </recommendedName>
</protein>
<dbReference type="EMBL" id="CP000036">
    <property type="protein sequence ID" value="ABB66169.1"/>
    <property type="molecule type" value="Genomic_DNA"/>
</dbReference>
<dbReference type="RefSeq" id="WP_000543389.1">
    <property type="nucleotide sequence ID" value="NC_007613.1"/>
</dbReference>
<dbReference type="SMR" id="Q320T9"/>
<dbReference type="GeneID" id="75202795"/>
<dbReference type="KEGG" id="sbo:SBO_1556"/>
<dbReference type="HOGENOM" id="CLU_2842804_0_0_6"/>
<dbReference type="Proteomes" id="UP000007067">
    <property type="component" value="Chromosome"/>
</dbReference>
<dbReference type="GO" id="GO:0005886">
    <property type="term" value="C:plasma membrane"/>
    <property type="evidence" value="ECO:0007669"/>
    <property type="project" value="UniProtKB-SubCell"/>
</dbReference>
<dbReference type="InterPro" id="IPR031411">
    <property type="entry name" value="SafA"/>
</dbReference>
<dbReference type="Pfam" id="PF17073">
    <property type="entry name" value="SafA"/>
    <property type="match status" value="1"/>
</dbReference>
<evidence type="ECO:0000250" key="1"/>
<evidence type="ECO:0000255" key="2"/>
<evidence type="ECO:0000305" key="3"/>
<proteinExistence type="inferred from homology"/>
<keyword id="KW-0997">Cell inner membrane</keyword>
<keyword id="KW-1003">Cell membrane</keyword>
<keyword id="KW-0472">Membrane</keyword>
<keyword id="KW-0735">Signal-anchor</keyword>
<keyword id="KW-0346">Stress response</keyword>
<keyword id="KW-0812">Transmembrane</keyword>
<keyword id="KW-1133">Transmembrane helix</keyword>
<comment type="function">
    <text evidence="1">Connects the signal transduction between the two-component systems EvgS/EvgA and PhoQ/PhoP, by directly interacting with PhoQ and thus activating the PhoQ/PhoP system, in response to acid stress conditions.</text>
</comment>
<comment type="subunit">
    <text evidence="1">Interacts with PhoQ.</text>
</comment>
<comment type="subcellular location">
    <subcellularLocation>
        <location evidence="1">Cell inner membrane</location>
        <topology evidence="1">Single-pass type II membrane protein</topology>
    </subcellularLocation>
</comment>
<comment type="induction">
    <text evidence="1">By acid stress, via the EvgS/EvgA system.</text>
</comment>
<comment type="similarity">
    <text evidence="3">Belongs to the SafA family.</text>
</comment>
<feature type="chain" id="PRO_0000223718" description="Two-component-system connector protein SafA">
    <location>
        <begin position="1"/>
        <end position="65"/>
    </location>
</feature>
<feature type="topological domain" description="Cytoplasmic" evidence="1">
    <location>
        <begin position="1"/>
        <end position="18"/>
    </location>
</feature>
<feature type="transmembrane region" description="Helical; Signal-anchor for type II membrane protein" evidence="2">
    <location>
        <begin position="19"/>
        <end position="39"/>
    </location>
</feature>
<feature type="topological domain" description="Periplasmic" evidence="1">
    <location>
        <begin position="40"/>
        <end position="65"/>
    </location>
</feature>